<proteinExistence type="inferred from homology"/>
<keyword id="KW-0479">Metal-binding</keyword>
<keyword id="KW-0511">Multifunctional enzyme</keyword>
<keyword id="KW-0521">NADP</keyword>
<keyword id="KW-0560">Oxidoreductase</keyword>
<keyword id="KW-1185">Reference proteome</keyword>
<name>MAO2_SALTY</name>
<organism>
    <name type="scientific">Salmonella typhimurium (strain LT2 / SGSC1412 / ATCC 700720)</name>
    <dbReference type="NCBI Taxonomy" id="99287"/>
    <lineage>
        <taxon>Bacteria</taxon>
        <taxon>Pseudomonadati</taxon>
        <taxon>Pseudomonadota</taxon>
        <taxon>Gammaproteobacteria</taxon>
        <taxon>Enterobacterales</taxon>
        <taxon>Enterobacteriaceae</taxon>
        <taxon>Salmonella</taxon>
    </lineage>
</organism>
<feature type="chain" id="PRO_0000160244" description="NADP-dependent malic enzyme">
    <location>
        <begin position="1"/>
        <end position="759"/>
    </location>
</feature>
<feature type="region of interest" description="Malic enzyme">
    <location>
        <begin position="1"/>
        <end position="428"/>
    </location>
</feature>
<feature type="region of interest" description="Phosphate acetyltransferase">
    <location>
        <begin position="429"/>
        <end position="759"/>
    </location>
</feature>
<feature type="active site" description="Proton donor" evidence="2">
    <location>
        <position position="39"/>
    </location>
</feature>
<feature type="active site" description="Proton acceptor" evidence="2">
    <location>
        <position position="94"/>
    </location>
</feature>
<feature type="binding site" evidence="2">
    <location>
        <position position="136"/>
    </location>
    <ligand>
        <name>a divalent metal cation</name>
        <dbReference type="ChEBI" id="CHEBI:60240"/>
    </ligand>
</feature>
<feature type="binding site" evidence="2">
    <location>
        <position position="137"/>
    </location>
    <ligand>
        <name>a divalent metal cation</name>
        <dbReference type="ChEBI" id="CHEBI:60240"/>
    </ligand>
</feature>
<feature type="binding site" evidence="2">
    <location>
        <position position="162"/>
    </location>
    <ligand>
        <name>a divalent metal cation</name>
        <dbReference type="ChEBI" id="CHEBI:60240"/>
    </ligand>
</feature>
<feature type="binding site" evidence="2">
    <location>
        <begin position="195"/>
        <end position="198"/>
    </location>
    <ligand>
        <name>NADP(+)</name>
        <dbReference type="ChEBI" id="CHEBI:58349"/>
    </ligand>
</feature>
<feature type="binding site" evidence="2">
    <location>
        <position position="288"/>
    </location>
    <ligand>
        <name>NADP(+)</name>
        <dbReference type="ChEBI" id="CHEBI:58349"/>
    </ligand>
</feature>
<feature type="binding site" evidence="2">
    <location>
        <position position="320"/>
    </location>
    <ligand>
        <name>NADP(+)</name>
        <dbReference type="ChEBI" id="CHEBI:58349"/>
    </ligand>
</feature>
<feature type="sequence conflict" description="In Ref. 2; AAC78109." evidence="3" ref="2">
    <original>A</original>
    <variation>G</variation>
    <location>
        <position position="610"/>
    </location>
</feature>
<feature type="sequence conflict" description="In Ref. 2; AAC78109." evidence="3" ref="2">
    <original>A</original>
    <variation>P</variation>
    <location>
        <position position="613"/>
    </location>
</feature>
<feature type="sequence conflict" description="In Ref. 2; AAC78109." evidence="3" ref="2">
    <original>R</original>
    <variation>H</variation>
    <location>
        <position position="621"/>
    </location>
</feature>
<feature type="sequence conflict" description="In Ref. 2; AAC78109." evidence="3" ref="2">
    <original>E</original>
    <variation>G</variation>
    <location>
        <position position="626"/>
    </location>
</feature>
<feature type="sequence conflict" description="In Ref. 2; AAC78109." evidence="3" ref="2">
    <original>S</original>
    <variation>C</variation>
    <location>
        <position position="635"/>
    </location>
</feature>
<feature type="sequence conflict" description="In Ref. 2; AAC78109." evidence="3" ref="2">
    <original>L</original>
    <variation>P</variation>
    <location>
        <position position="643"/>
    </location>
</feature>
<feature type="sequence conflict" description="In Ref. 2; AAC78109." evidence="3" ref="2">
    <original>R</original>
    <variation>C</variation>
    <location>
        <position position="679"/>
    </location>
</feature>
<feature type="sequence conflict" description="In Ref. 2; AAC78109." evidence="3" ref="2">
    <original>A</original>
    <variation>G</variation>
    <location>
        <position position="754"/>
    </location>
</feature>
<feature type="sequence conflict" description="In Ref. 2; AAC78109." evidence="3" ref="2">
    <original>T</original>
    <variation>Q</variation>
    <location>
        <position position="757"/>
    </location>
</feature>
<protein>
    <recommendedName>
        <fullName>NADP-dependent malic enzyme</fullName>
        <shortName>NADP-ME</shortName>
        <ecNumber>1.1.1.40</ecNumber>
    </recommendedName>
</protein>
<accession>Q9ZFV8</accession>
<comment type="catalytic activity">
    <reaction>
        <text>(S)-malate + NADP(+) = pyruvate + CO2 + NADPH</text>
        <dbReference type="Rhea" id="RHEA:18253"/>
        <dbReference type="ChEBI" id="CHEBI:15361"/>
        <dbReference type="ChEBI" id="CHEBI:15589"/>
        <dbReference type="ChEBI" id="CHEBI:16526"/>
        <dbReference type="ChEBI" id="CHEBI:57783"/>
        <dbReference type="ChEBI" id="CHEBI:58349"/>
        <dbReference type="EC" id="1.1.1.40"/>
    </reaction>
</comment>
<comment type="catalytic activity">
    <reaction>
        <text>oxaloacetate + H(+) = pyruvate + CO2</text>
        <dbReference type="Rhea" id="RHEA:15641"/>
        <dbReference type="ChEBI" id="CHEBI:15361"/>
        <dbReference type="ChEBI" id="CHEBI:15378"/>
        <dbReference type="ChEBI" id="CHEBI:16452"/>
        <dbReference type="ChEBI" id="CHEBI:16526"/>
        <dbReference type="EC" id="1.1.1.40"/>
    </reaction>
</comment>
<comment type="cofactor">
    <cofactor evidence="1">
        <name>Mg(2+)</name>
        <dbReference type="ChEBI" id="CHEBI:18420"/>
    </cofactor>
    <cofactor evidence="1">
        <name>Mn(2+)</name>
        <dbReference type="ChEBI" id="CHEBI:29035"/>
    </cofactor>
    <text evidence="1">Divalent metal cations. Prefers magnesium or manganese.</text>
</comment>
<comment type="similarity">
    <text evidence="3">In the N-terminal section; belongs to the malic enzymes family.</text>
</comment>
<comment type="similarity">
    <text evidence="3">In the C-terminal section; belongs to the phosphate acetyltransferase and butyryltransferase family.</text>
</comment>
<evidence type="ECO:0000250" key="1"/>
<evidence type="ECO:0000250" key="2">
    <source>
        <dbReference type="UniProtKB" id="P40927"/>
    </source>
</evidence>
<evidence type="ECO:0000305" key="3"/>
<dbReference type="EC" id="1.1.1.40"/>
<dbReference type="EMBL" id="AE006468">
    <property type="protein sequence ID" value="AAL21366.1"/>
    <property type="molecule type" value="Genomic_DNA"/>
</dbReference>
<dbReference type="EMBL" id="AF093749">
    <property type="protein sequence ID" value="AAC78109.1"/>
    <property type="molecule type" value="Genomic_DNA"/>
</dbReference>
<dbReference type="RefSeq" id="NP_461407.1">
    <property type="nucleotide sequence ID" value="NC_003197.2"/>
</dbReference>
<dbReference type="RefSeq" id="WP_000344297.1">
    <property type="nucleotide sequence ID" value="NC_003197.2"/>
</dbReference>
<dbReference type="SMR" id="Q9ZFV8"/>
<dbReference type="STRING" id="99287.STM2472"/>
<dbReference type="PaxDb" id="99287-STM2472"/>
<dbReference type="GeneID" id="1253994"/>
<dbReference type="KEGG" id="stm:STM2472"/>
<dbReference type="PATRIC" id="fig|99287.12.peg.2610"/>
<dbReference type="HOGENOM" id="CLU_012366_0_0_6"/>
<dbReference type="OMA" id="RNYFAAM"/>
<dbReference type="PhylomeDB" id="Q9ZFV8"/>
<dbReference type="BioCyc" id="SENT99287:STM2472-MONOMER"/>
<dbReference type="Proteomes" id="UP000001014">
    <property type="component" value="Chromosome"/>
</dbReference>
<dbReference type="GO" id="GO:0016746">
    <property type="term" value="F:acyltransferase activity"/>
    <property type="evidence" value="ECO:0007669"/>
    <property type="project" value="InterPro"/>
</dbReference>
<dbReference type="GO" id="GO:0004473">
    <property type="term" value="F:malate dehydrogenase (decarboxylating) (NADP+) activity"/>
    <property type="evidence" value="ECO:0007669"/>
    <property type="project" value="UniProtKB-EC"/>
</dbReference>
<dbReference type="GO" id="GO:0046872">
    <property type="term" value="F:metal ion binding"/>
    <property type="evidence" value="ECO:0007669"/>
    <property type="project" value="UniProtKB-KW"/>
</dbReference>
<dbReference type="GO" id="GO:0051287">
    <property type="term" value="F:NAD binding"/>
    <property type="evidence" value="ECO:0007669"/>
    <property type="project" value="InterPro"/>
</dbReference>
<dbReference type="GO" id="GO:0008948">
    <property type="term" value="F:oxaloacetate decarboxylase activity"/>
    <property type="evidence" value="ECO:0007669"/>
    <property type="project" value="RHEA"/>
</dbReference>
<dbReference type="GO" id="GO:0006108">
    <property type="term" value="P:malate metabolic process"/>
    <property type="evidence" value="ECO:0007669"/>
    <property type="project" value="InterPro"/>
</dbReference>
<dbReference type="CDD" id="cd05311">
    <property type="entry name" value="NAD_bind_2_malic_enz"/>
    <property type="match status" value="1"/>
</dbReference>
<dbReference type="FunFam" id="3.40.50.10380:FF:000003">
    <property type="entry name" value="NADP-dependent malic enzyme"/>
    <property type="match status" value="1"/>
</dbReference>
<dbReference type="FunFam" id="3.40.50.10750:FF:000002">
    <property type="entry name" value="NADP-dependent malic enzyme"/>
    <property type="match status" value="1"/>
</dbReference>
<dbReference type="FunFam" id="3.40.50.10950:FF:000002">
    <property type="entry name" value="NADP-dependent malic enzyme"/>
    <property type="match status" value="1"/>
</dbReference>
<dbReference type="FunFam" id="3.40.50.720:FF:000095">
    <property type="entry name" value="NADP-dependent malic enzyme"/>
    <property type="match status" value="1"/>
</dbReference>
<dbReference type="Gene3D" id="3.40.50.10950">
    <property type="match status" value="1"/>
</dbReference>
<dbReference type="Gene3D" id="3.40.50.10750">
    <property type="entry name" value="Isocitrate/Isopropylmalate dehydrogenase-like"/>
    <property type="match status" value="1"/>
</dbReference>
<dbReference type="Gene3D" id="3.40.50.10380">
    <property type="entry name" value="Malic enzyme, N-terminal domain"/>
    <property type="match status" value="1"/>
</dbReference>
<dbReference type="Gene3D" id="3.40.50.720">
    <property type="entry name" value="NAD(P)-binding Rossmann-like Domain"/>
    <property type="match status" value="1"/>
</dbReference>
<dbReference type="InterPro" id="IPR046346">
    <property type="entry name" value="Aminoacid_DH-like_N_sf"/>
</dbReference>
<dbReference type="InterPro" id="IPR051674">
    <property type="entry name" value="Malate_Decarboxylase"/>
</dbReference>
<dbReference type="InterPro" id="IPR015884">
    <property type="entry name" value="Malic_enzyme_CS"/>
</dbReference>
<dbReference type="InterPro" id="IPR012301">
    <property type="entry name" value="Malic_N_dom"/>
</dbReference>
<dbReference type="InterPro" id="IPR037062">
    <property type="entry name" value="Malic_N_dom_sf"/>
</dbReference>
<dbReference type="InterPro" id="IPR012302">
    <property type="entry name" value="Malic_NAD-bd"/>
</dbReference>
<dbReference type="InterPro" id="IPR045213">
    <property type="entry name" value="Malic_NAD-bd_bact_type"/>
</dbReference>
<dbReference type="InterPro" id="IPR012188">
    <property type="entry name" value="ME_PTA"/>
</dbReference>
<dbReference type="InterPro" id="IPR036291">
    <property type="entry name" value="NAD(P)-bd_dom_sf"/>
</dbReference>
<dbReference type="InterPro" id="IPR042113">
    <property type="entry name" value="P_AcTrfase_dom1"/>
</dbReference>
<dbReference type="InterPro" id="IPR042112">
    <property type="entry name" value="P_AcTrfase_dom2"/>
</dbReference>
<dbReference type="InterPro" id="IPR002505">
    <property type="entry name" value="PTA_PTB"/>
</dbReference>
<dbReference type="PANTHER" id="PTHR43237">
    <property type="entry name" value="NADP-DEPENDENT MALIC ENZYME"/>
    <property type="match status" value="1"/>
</dbReference>
<dbReference type="PANTHER" id="PTHR43237:SF4">
    <property type="entry name" value="NADP-DEPENDENT MALIC ENZYME"/>
    <property type="match status" value="1"/>
</dbReference>
<dbReference type="Pfam" id="PF00390">
    <property type="entry name" value="malic"/>
    <property type="match status" value="1"/>
</dbReference>
<dbReference type="Pfam" id="PF03949">
    <property type="entry name" value="Malic_M"/>
    <property type="match status" value="1"/>
</dbReference>
<dbReference type="Pfam" id="PF01515">
    <property type="entry name" value="PTA_PTB"/>
    <property type="match status" value="1"/>
</dbReference>
<dbReference type="PIRSF" id="PIRSF036684">
    <property type="entry name" value="ME_PTA"/>
    <property type="match status" value="1"/>
</dbReference>
<dbReference type="SMART" id="SM01274">
    <property type="entry name" value="malic"/>
    <property type="match status" value="1"/>
</dbReference>
<dbReference type="SMART" id="SM00919">
    <property type="entry name" value="Malic_M"/>
    <property type="match status" value="1"/>
</dbReference>
<dbReference type="SUPFAM" id="SSF53223">
    <property type="entry name" value="Aminoacid dehydrogenase-like, N-terminal domain"/>
    <property type="match status" value="1"/>
</dbReference>
<dbReference type="SUPFAM" id="SSF53659">
    <property type="entry name" value="Isocitrate/Isopropylmalate dehydrogenase-like"/>
    <property type="match status" value="1"/>
</dbReference>
<dbReference type="SUPFAM" id="SSF51735">
    <property type="entry name" value="NAD(P)-binding Rossmann-fold domains"/>
    <property type="match status" value="1"/>
</dbReference>
<dbReference type="PROSITE" id="PS00331">
    <property type="entry name" value="MALIC_ENZYMES"/>
    <property type="match status" value="1"/>
</dbReference>
<reference key="1">
    <citation type="journal article" date="2001" name="Nature">
        <title>Complete genome sequence of Salmonella enterica serovar Typhimurium LT2.</title>
        <authorList>
            <person name="McClelland M."/>
            <person name="Sanderson K.E."/>
            <person name="Spieth J."/>
            <person name="Clifton S.W."/>
            <person name="Latreille P."/>
            <person name="Courtney L."/>
            <person name="Porwollik S."/>
            <person name="Ali J."/>
            <person name="Dante M."/>
            <person name="Du F."/>
            <person name="Hou S."/>
            <person name="Layman D."/>
            <person name="Leonard S."/>
            <person name="Nguyen C."/>
            <person name="Scott K."/>
            <person name="Holmes A."/>
            <person name="Grewal N."/>
            <person name="Mulvaney E."/>
            <person name="Ryan E."/>
            <person name="Sun H."/>
            <person name="Florea L."/>
            <person name="Miller W."/>
            <person name="Stoneking T."/>
            <person name="Nhan M."/>
            <person name="Waterston R."/>
            <person name="Wilson R.K."/>
        </authorList>
    </citation>
    <scope>NUCLEOTIDE SEQUENCE [LARGE SCALE GENOMIC DNA]</scope>
    <source>
        <strain>LT2 / SGSC1412 / ATCC 700720</strain>
    </source>
</reference>
<reference key="2">
    <citation type="journal article" date="1999" name="J. Bacteriol.">
        <title>The 17-gene ethanolamine (eut) operon of Salmonella typhimurium encodes five homologues of carboxysome shell proteins.</title>
        <authorList>
            <person name="Kofoid E.C."/>
            <person name="Rappleye C.A."/>
            <person name="Stojiljkovic I."/>
            <person name="Roth J.R."/>
        </authorList>
    </citation>
    <scope>NUCLEOTIDE SEQUENCE [GENOMIC DNA] OF 610-759</scope>
    <source>
        <strain>LT2</strain>
    </source>
</reference>
<gene>
    <name type="primary">maeB</name>
    <name type="ordered locus">STM2472</name>
</gene>
<sequence>MDEQLKQSALDFHEFPVPGKIQVSPTKPLATQRDLALAYSPGVAAPCLEIEKDPLAAYKYTARGNLVAVISNGTAVLGLGNIGALAGKPVMEGKGVLFKKFAGIDVFDIEVDELDPDKFINVVAALEPTFGGINLEDIKAPECFYIEQKLRERMNIPVFHDDQHGTAIISTAAILNGLRVVEKNISDVRMVVSGAGAAAIACMNLLVALGMQKHNIVVCDSKGVIYKGREPNMAETKAAYAVDDSGKRTLDEVIDGADIFLGCSGPKVLTQEMVKKMARAPMILALANPEPEILPPLAKEVRPDAIICTGRSDYPNQVNNVLCFPFIFRGALDVGATAINEEMKLAAVRAIAELAHAEQSEVVASAYGDQDLSFGPEYIIPKPFDPRLIVKIAPAVAKAAMDSGVATRPIADFDAYIDKLTEFVYKTNLFMKPIFSQARKDPKRVVLPEGEEARVLHATQELITLGLAKPILIGRPSVIEMRIQKLGLQIKAGVDFEIVNNESDPRFKEYWSEYYQIMKRRGITQEQAQRAMIGNHTAIGAIMVQRGEADAMICGTIGDYHEHFSVVKAVFGYRDGVHTAGAMNALLLPSGNTFIADTYVNEDPTPEQLAEIAVMAAETVRRFGIEPKVALLSHSNFGSSNSLSASKMRETLERVRERAPDLMIDGEMHGDAALVESIRNDRMPDSPLKGAANILVMPNMEAARISYNLLRVSSSEGVTVGPVLMGVSKPVHVLTPIASVRRIVNMVALAVVEAQTTPL</sequence>